<organism>
    <name type="scientific">Shigella boydii serotype 4 (strain Sb227)</name>
    <dbReference type="NCBI Taxonomy" id="300268"/>
    <lineage>
        <taxon>Bacteria</taxon>
        <taxon>Pseudomonadati</taxon>
        <taxon>Pseudomonadota</taxon>
        <taxon>Gammaproteobacteria</taxon>
        <taxon>Enterobacterales</taxon>
        <taxon>Enterobacteriaceae</taxon>
        <taxon>Shigella</taxon>
    </lineage>
</organism>
<protein>
    <recommendedName>
        <fullName evidence="1">Chaperone protein HtpG</fullName>
    </recommendedName>
    <alternativeName>
        <fullName evidence="1">Heat shock protein HtpG</fullName>
    </alternativeName>
    <alternativeName>
        <fullName evidence="1">High temperature protein G</fullName>
    </alternativeName>
</protein>
<evidence type="ECO:0000255" key="1">
    <source>
        <dbReference type="HAMAP-Rule" id="MF_00505"/>
    </source>
</evidence>
<reference key="1">
    <citation type="journal article" date="2005" name="Nucleic Acids Res.">
        <title>Genome dynamics and diversity of Shigella species, the etiologic agents of bacillary dysentery.</title>
        <authorList>
            <person name="Yang F."/>
            <person name="Yang J."/>
            <person name="Zhang X."/>
            <person name="Chen L."/>
            <person name="Jiang Y."/>
            <person name="Yan Y."/>
            <person name="Tang X."/>
            <person name="Wang J."/>
            <person name="Xiong Z."/>
            <person name="Dong J."/>
            <person name="Xue Y."/>
            <person name="Zhu Y."/>
            <person name="Xu X."/>
            <person name="Sun L."/>
            <person name="Chen S."/>
            <person name="Nie H."/>
            <person name="Peng J."/>
            <person name="Xu J."/>
            <person name="Wang Y."/>
            <person name="Yuan Z."/>
            <person name="Wen Y."/>
            <person name="Yao Z."/>
            <person name="Shen Y."/>
            <person name="Qiang B."/>
            <person name="Hou Y."/>
            <person name="Yu J."/>
            <person name="Jin Q."/>
        </authorList>
    </citation>
    <scope>NUCLEOTIDE SEQUENCE [LARGE SCALE GENOMIC DNA]</scope>
    <source>
        <strain>Sb227</strain>
    </source>
</reference>
<name>HTPG_SHIBS</name>
<gene>
    <name evidence="1" type="primary">htpG</name>
    <name type="ordered locus">SBO_0373</name>
</gene>
<comment type="function">
    <text evidence="1">Molecular chaperone. Has ATPase activity.</text>
</comment>
<comment type="subunit">
    <text evidence="1">Homodimer.</text>
</comment>
<comment type="subcellular location">
    <subcellularLocation>
        <location evidence="1">Cytoplasm</location>
    </subcellularLocation>
</comment>
<comment type="similarity">
    <text evidence="1">Belongs to the heat shock protein 90 family.</text>
</comment>
<dbReference type="EMBL" id="CP000036">
    <property type="protein sequence ID" value="ABB65085.1"/>
    <property type="molecule type" value="Genomic_DNA"/>
</dbReference>
<dbReference type="RefSeq" id="WP_000678201.1">
    <property type="nucleotide sequence ID" value="NC_007613.1"/>
</dbReference>
<dbReference type="SMR" id="Q325C3"/>
<dbReference type="GeneID" id="93776977"/>
<dbReference type="KEGG" id="sbo:SBO_0373"/>
<dbReference type="HOGENOM" id="CLU_006684_3_0_6"/>
<dbReference type="Proteomes" id="UP000007067">
    <property type="component" value="Chromosome"/>
</dbReference>
<dbReference type="GO" id="GO:0005737">
    <property type="term" value="C:cytoplasm"/>
    <property type="evidence" value="ECO:0007669"/>
    <property type="project" value="UniProtKB-SubCell"/>
</dbReference>
<dbReference type="GO" id="GO:0005524">
    <property type="term" value="F:ATP binding"/>
    <property type="evidence" value="ECO:0007669"/>
    <property type="project" value="UniProtKB-UniRule"/>
</dbReference>
<dbReference type="GO" id="GO:0016887">
    <property type="term" value="F:ATP hydrolysis activity"/>
    <property type="evidence" value="ECO:0007669"/>
    <property type="project" value="InterPro"/>
</dbReference>
<dbReference type="GO" id="GO:0140662">
    <property type="term" value="F:ATP-dependent protein folding chaperone"/>
    <property type="evidence" value="ECO:0007669"/>
    <property type="project" value="InterPro"/>
</dbReference>
<dbReference type="GO" id="GO:0051082">
    <property type="term" value="F:unfolded protein binding"/>
    <property type="evidence" value="ECO:0007669"/>
    <property type="project" value="UniProtKB-UniRule"/>
</dbReference>
<dbReference type="CDD" id="cd16927">
    <property type="entry name" value="HATPase_Hsp90-like"/>
    <property type="match status" value="1"/>
</dbReference>
<dbReference type="FunFam" id="1.20.120.790:FF:000002">
    <property type="entry name" value="Molecular chaperone HtpG"/>
    <property type="match status" value="1"/>
</dbReference>
<dbReference type="FunFam" id="3.30.230.80:FF:000002">
    <property type="entry name" value="Molecular chaperone HtpG"/>
    <property type="match status" value="1"/>
</dbReference>
<dbReference type="FunFam" id="3.30.565.10:FF:000009">
    <property type="entry name" value="Molecular chaperone HtpG"/>
    <property type="match status" value="1"/>
</dbReference>
<dbReference type="FunFam" id="3.40.50.11260:FF:000002">
    <property type="entry name" value="Molecular chaperone HtpG"/>
    <property type="match status" value="1"/>
</dbReference>
<dbReference type="Gene3D" id="3.30.230.80">
    <property type="match status" value="1"/>
</dbReference>
<dbReference type="Gene3D" id="3.40.50.11260">
    <property type="match status" value="1"/>
</dbReference>
<dbReference type="Gene3D" id="1.20.120.790">
    <property type="entry name" value="Heat shock protein 90, C-terminal domain"/>
    <property type="match status" value="1"/>
</dbReference>
<dbReference type="Gene3D" id="3.30.565.10">
    <property type="entry name" value="Histidine kinase-like ATPase, C-terminal domain"/>
    <property type="match status" value="1"/>
</dbReference>
<dbReference type="HAMAP" id="MF_00505">
    <property type="entry name" value="HSP90"/>
    <property type="match status" value="1"/>
</dbReference>
<dbReference type="InterPro" id="IPR036890">
    <property type="entry name" value="HATPase_C_sf"/>
</dbReference>
<dbReference type="InterPro" id="IPR019805">
    <property type="entry name" value="Heat_shock_protein_90_CS"/>
</dbReference>
<dbReference type="InterPro" id="IPR037196">
    <property type="entry name" value="HSP90_C"/>
</dbReference>
<dbReference type="InterPro" id="IPR001404">
    <property type="entry name" value="Hsp90_fam"/>
</dbReference>
<dbReference type="InterPro" id="IPR020575">
    <property type="entry name" value="Hsp90_N"/>
</dbReference>
<dbReference type="InterPro" id="IPR020568">
    <property type="entry name" value="Ribosomal_Su5_D2-typ_SF"/>
</dbReference>
<dbReference type="NCBIfam" id="NF003555">
    <property type="entry name" value="PRK05218.1"/>
    <property type="match status" value="1"/>
</dbReference>
<dbReference type="PANTHER" id="PTHR11528">
    <property type="entry name" value="HEAT SHOCK PROTEIN 90 FAMILY MEMBER"/>
    <property type="match status" value="1"/>
</dbReference>
<dbReference type="Pfam" id="PF13589">
    <property type="entry name" value="HATPase_c_3"/>
    <property type="match status" value="1"/>
</dbReference>
<dbReference type="Pfam" id="PF00183">
    <property type="entry name" value="HSP90"/>
    <property type="match status" value="1"/>
</dbReference>
<dbReference type="PIRSF" id="PIRSF002583">
    <property type="entry name" value="Hsp90"/>
    <property type="match status" value="1"/>
</dbReference>
<dbReference type="PRINTS" id="PR00775">
    <property type="entry name" value="HEATSHOCK90"/>
</dbReference>
<dbReference type="SMART" id="SM00387">
    <property type="entry name" value="HATPase_c"/>
    <property type="match status" value="1"/>
</dbReference>
<dbReference type="SUPFAM" id="SSF55874">
    <property type="entry name" value="ATPase domain of HSP90 chaperone/DNA topoisomerase II/histidine kinase"/>
    <property type="match status" value="1"/>
</dbReference>
<dbReference type="SUPFAM" id="SSF110942">
    <property type="entry name" value="HSP90 C-terminal domain"/>
    <property type="match status" value="1"/>
</dbReference>
<dbReference type="SUPFAM" id="SSF54211">
    <property type="entry name" value="Ribosomal protein S5 domain 2-like"/>
    <property type="match status" value="1"/>
</dbReference>
<dbReference type="PROSITE" id="PS00298">
    <property type="entry name" value="HSP90"/>
    <property type="match status" value="1"/>
</dbReference>
<feature type="chain" id="PRO_0000224231" description="Chaperone protein HtpG">
    <location>
        <begin position="1"/>
        <end position="624"/>
    </location>
</feature>
<feature type="region of interest" description="A; substrate-binding" evidence="1">
    <location>
        <begin position="1"/>
        <end position="336"/>
    </location>
</feature>
<feature type="region of interest" description="B" evidence="1">
    <location>
        <begin position="337"/>
        <end position="552"/>
    </location>
</feature>
<feature type="region of interest" description="C" evidence="1">
    <location>
        <begin position="553"/>
        <end position="624"/>
    </location>
</feature>
<accession>Q325C3</accession>
<sequence>MKGQETRGFQSEVKQLLHLMIHSLYSNKEIFLRELISNASDAADKLRFRALSNPDLYEGDGELRVRVSFDKDKRTLTISDNGVGMTRDEVIDHLGTIAKSGTKSFLESLGSDQAKDSQLIGQFGVGFYSAFIVADKVTVRTRAAGEKPENGVFWESAGEGEYTVADITKEDRGTEITLHLREGEDEFLDDWRVRSIISKYSDHIALPVEIEKREEKDGETVISWEKINKAQALWTRNKSEITDEEYKEFYKHIAHDFNDPLTWSHNRVEGKQEYTSLLYIPSQAPWDMWNRDHKHGLKLYVQRVFIMDDAEQFMPNYLRFVRGLIDSSDLPLNVSREILQDSTVTRNLRNALTKRVLQMLEKLAKDDAEKYQTFWQQFGLVLKEGPAEDFANQEAIAKLLRFASTHTDSSAQTVSLEDYVSRMKEGQEKIYYITADSYAAAKSSPHLELLRKKGIEVLLLSDRIDEWMMNYLTEFDGKPFQSVSKVDESLEKLADEVDESAKEAEKALTPFIDRVKALLGERVKDVRLTHRLTDTPAIVSTDADEMSTQMAKLFAAAGQKVPEVKYIFELNPDHVLVKRAADTEDEAKFSEWVELLLDQALLAERGTLEDPNLFIRRMNQLLVS</sequence>
<keyword id="KW-0067">ATP-binding</keyword>
<keyword id="KW-0143">Chaperone</keyword>
<keyword id="KW-0963">Cytoplasm</keyword>
<keyword id="KW-0547">Nucleotide-binding</keyword>
<keyword id="KW-0346">Stress response</keyword>
<proteinExistence type="inferred from homology"/>